<dbReference type="EMBL" id="BX284601">
    <property type="protein sequence ID" value="CCD66213.1"/>
    <property type="molecule type" value="Genomic_DNA"/>
</dbReference>
<dbReference type="RefSeq" id="NP_740843.1">
    <property type="nucleotide sequence ID" value="NM_170856.3"/>
</dbReference>
<dbReference type="SMR" id="Q8TA52"/>
<dbReference type="ComplexPortal" id="CPX-1290">
    <property type="entry name" value="Intraflagellar transport complex B"/>
</dbReference>
<dbReference type="DIP" id="DIP-61857N"/>
<dbReference type="FunCoup" id="Q8TA52">
    <property type="interactions" value="326"/>
</dbReference>
<dbReference type="IntAct" id="Q8TA52">
    <property type="interactions" value="1"/>
</dbReference>
<dbReference type="STRING" id="6239.Y110A7A.20.1"/>
<dbReference type="PaxDb" id="6239-Y110A7A.20"/>
<dbReference type="EnsemblMetazoa" id="Y110A7A.20.1">
    <property type="protein sequence ID" value="Y110A7A.20.1"/>
    <property type="gene ID" value="WBGene00022465"/>
</dbReference>
<dbReference type="GeneID" id="260266"/>
<dbReference type="KEGG" id="cel:CELE_Y110A7A.20"/>
<dbReference type="UCSC" id="Y110A7A.20">
    <property type="organism name" value="c. elegans"/>
</dbReference>
<dbReference type="AGR" id="WB:WBGene00022465"/>
<dbReference type="CTD" id="260266"/>
<dbReference type="WormBase" id="Y110A7A.20">
    <property type="protein sequence ID" value="CE23246"/>
    <property type="gene ID" value="WBGene00022465"/>
    <property type="gene designation" value="ift-20"/>
</dbReference>
<dbReference type="eggNOG" id="ENOG502RYYR">
    <property type="taxonomic scope" value="Eukaryota"/>
</dbReference>
<dbReference type="GeneTree" id="ENSGT00390000003413"/>
<dbReference type="HOGENOM" id="CLU_134163_2_0_1"/>
<dbReference type="InParanoid" id="Q8TA52"/>
<dbReference type="OMA" id="CIQMMTE"/>
<dbReference type="OrthoDB" id="10254896at2759"/>
<dbReference type="PhylomeDB" id="Q8TA52"/>
<dbReference type="Reactome" id="R-CEL-5620924">
    <property type="pathway name" value="Intraflagellar transport"/>
</dbReference>
<dbReference type="PRO" id="PR:Q8TA52"/>
<dbReference type="Proteomes" id="UP000001940">
    <property type="component" value="Chromosome I"/>
</dbReference>
<dbReference type="Bgee" id="WBGene00022465">
    <property type="expression patterns" value="Expressed in pharyngeal muscle cell (C elegans) and 3 other cell types or tissues"/>
</dbReference>
<dbReference type="GO" id="GO:0005813">
    <property type="term" value="C:centrosome"/>
    <property type="evidence" value="ECO:0000318"/>
    <property type="project" value="GO_Central"/>
</dbReference>
<dbReference type="GO" id="GO:0036064">
    <property type="term" value="C:ciliary basal body"/>
    <property type="evidence" value="ECO:0000318"/>
    <property type="project" value="GO_Central"/>
</dbReference>
<dbReference type="GO" id="GO:0097546">
    <property type="term" value="C:ciliary base"/>
    <property type="evidence" value="ECO:0000318"/>
    <property type="project" value="GO_Central"/>
</dbReference>
<dbReference type="GO" id="GO:0005929">
    <property type="term" value="C:cilium"/>
    <property type="evidence" value="ECO:0000303"/>
    <property type="project" value="ComplexPortal"/>
</dbReference>
<dbReference type="GO" id="GO:0005737">
    <property type="term" value="C:cytoplasm"/>
    <property type="evidence" value="ECO:0000318"/>
    <property type="project" value="GO_Central"/>
</dbReference>
<dbReference type="GO" id="GO:0030425">
    <property type="term" value="C:dendrite"/>
    <property type="evidence" value="ECO:0000314"/>
    <property type="project" value="WormBase"/>
</dbReference>
<dbReference type="GO" id="GO:0030990">
    <property type="term" value="C:intraciliary transport particle"/>
    <property type="evidence" value="ECO:0000318"/>
    <property type="project" value="GO_Central"/>
</dbReference>
<dbReference type="GO" id="GO:0030992">
    <property type="term" value="C:intraciliary transport particle B"/>
    <property type="evidence" value="ECO:0000303"/>
    <property type="project" value="ComplexPortal"/>
</dbReference>
<dbReference type="GO" id="GO:0043025">
    <property type="term" value="C:neuronal cell body"/>
    <property type="evidence" value="ECO:0000314"/>
    <property type="project" value="WormBase"/>
</dbReference>
<dbReference type="GO" id="GO:0097730">
    <property type="term" value="C:non-motile cilium"/>
    <property type="evidence" value="ECO:0000314"/>
    <property type="project" value="WormBase"/>
</dbReference>
<dbReference type="GO" id="GO:0060271">
    <property type="term" value="P:cilium assembly"/>
    <property type="evidence" value="ECO:0000318"/>
    <property type="project" value="GO_Central"/>
</dbReference>
<dbReference type="GO" id="GO:0042073">
    <property type="term" value="P:intraciliary transport"/>
    <property type="evidence" value="ECO:0000303"/>
    <property type="project" value="ComplexPortal"/>
</dbReference>
<dbReference type="GO" id="GO:0061512">
    <property type="term" value="P:protein localization to cilium"/>
    <property type="evidence" value="ECO:0000318"/>
    <property type="project" value="GO_Central"/>
</dbReference>
<dbReference type="InterPro" id="IPR028172">
    <property type="entry name" value="FT20"/>
</dbReference>
<dbReference type="PANTHER" id="PTHR31978">
    <property type="entry name" value="INTRAFLAGELLAR TRANSPORT PROTEIN 20 HOMOLOG"/>
    <property type="match status" value="1"/>
</dbReference>
<dbReference type="PANTHER" id="PTHR31978:SF1">
    <property type="entry name" value="INTRAFLAGELLAR TRANSPORT PROTEIN 20 HOMOLOG"/>
    <property type="match status" value="1"/>
</dbReference>
<dbReference type="Pfam" id="PF14931">
    <property type="entry name" value="IFT20"/>
    <property type="match status" value="1"/>
</dbReference>
<name>IFT20_CAEEL</name>
<accession>Q8TA52</accession>
<gene>
    <name evidence="6" type="primary">ift-20</name>
    <name evidence="6" type="ORF">Y110A7A.20</name>
</gene>
<sequence>MGDEQLAKAGLFVDDFNRLRLIDPDVAELLQSAQDKSSEFNDQLKNFQTTTGGLIDSIEEFANVVETEKIRAMMVRNTQERDLAEDDPVLLQMTIRELTVEKERLRVELEAVRKIEKEQDECIQMMTEH</sequence>
<comment type="function">
    <text evidence="2">Component of the intraflagellar transport (IFT) complex B required for transport of proteins in the motile cilium. Required for ciliary entrance and transport of specific ciliary cargo proteins such as che-3 which are related to motility.</text>
</comment>
<comment type="subunit">
    <text evidence="2">Component of the IFT complex B composed of at least che-2, che-13, dyf-1, dyf-3, dyf-6, dyf-11, dyf-13, ift-20, ift-74, ift-81, ifta-2, osm-1, osm-5 and osm-6.</text>
</comment>
<comment type="subcellular location">
    <subcellularLocation>
        <location evidence="4">Cell projection</location>
        <location evidence="4">Cilium</location>
    </subcellularLocation>
</comment>
<keyword id="KW-0966">Cell projection</keyword>
<keyword id="KW-0969">Cilium</keyword>
<keyword id="KW-0175">Coiled coil</keyword>
<keyword id="KW-1185">Reference proteome</keyword>
<proteinExistence type="evidence at protein level"/>
<organism evidence="5">
    <name type="scientific">Caenorhabditis elegans</name>
    <dbReference type="NCBI Taxonomy" id="6239"/>
    <lineage>
        <taxon>Eukaryota</taxon>
        <taxon>Metazoa</taxon>
        <taxon>Ecdysozoa</taxon>
        <taxon>Nematoda</taxon>
        <taxon>Chromadorea</taxon>
        <taxon>Rhabditida</taxon>
        <taxon>Rhabditina</taxon>
        <taxon>Rhabditomorpha</taxon>
        <taxon>Rhabditoidea</taxon>
        <taxon>Rhabditidae</taxon>
        <taxon>Peloderinae</taxon>
        <taxon>Caenorhabditis</taxon>
    </lineage>
</organism>
<feature type="chain" id="PRO_0000442220" description="Intraflagellar transport protein 20 homolog" evidence="3">
    <location>
        <begin position="1"/>
        <end position="129"/>
    </location>
</feature>
<feature type="coiled-coil region" evidence="1">
    <location>
        <begin position="89"/>
        <end position="121"/>
    </location>
</feature>
<evidence type="ECO:0000255" key="1"/>
<evidence type="ECO:0000269" key="2">
    <source>
    </source>
</evidence>
<evidence type="ECO:0000305" key="3"/>
<evidence type="ECO:0000305" key="4">
    <source>
    </source>
</evidence>
<evidence type="ECO:0000312" key="5">
    <source>
        <dbReference type="Proteomes" id="UP000001940"/>
    </source>
</evidence>
<evidence type="ECO:0000312" key="6">
    <source>
        <dbReference type="WormBase" id="Y110A7A.20"/>
    </source>
</evidence>
<reference evidence="5" key="1">
    <citation type="journal article" date="1998" name="Science">
        <title>Genome sequence of the nematode C. elegans: a platform for investigating biology.</title>
        <authorList>
            <consortium name="The C. elegans sequencing consortium"/>
        </authorList>
    </citation>
    <scope>NUCLEOTIDE SEQUENCE [LARGE SCALE GENOMIC DNA]</scope>
    <source>
        <strain evidence="5">Bristol N2</strain>
    </source>
</reference>
<reference evidence="3" key="2">
    <citation type="journal article" date="2017" name="Curr. Biol.">
        <title>Dynein-driven retrograde intraflagellar transport is triphasic in C. elegans sensory cilia.</title>
        <authorList>
            <person name="Yi P."/>
            <person name="Li W.J."/>
            <person name="Dong M.Q."/>
            <person name="Ou G."/>
        </authorList>
    </citation>
    <scope>FUNCTION</scope>
    <scope>IDENTIFICATION IN IFT COMPLEX B</scope>
    <scope>SUBCELLULAR LOCATION</scope>
    <scope>IDENTIFICATION BY MASS SPECTROMETRY</scope>
</reference>
<protein>
    <recommendedName>
        <fullName>Intraflagellar transport protein 20 homolog</fullName>
    </recommendedName>
</protein>